<protein>
    <recommendedName>
        <fullName evidence="2">Uncharacterized protein SPCC1840.13</fullName>
    </recommendedName>
</protein>
<dbReference type="EMBL" id="CU329672">
    <property type="protein sequence ID" value="CAK9842056.1"/>
    <property type="molecule type" value="Genomic_DNA"/>
</dbReference>
<dbReference type="SMR" id="A0AAN2H888"/>
<dbReference type="PomBase" id="SPCC1840.13"/>
<dbReference type="Proteomes" id="UP000002485">
    <property type="component" value="Chromosome III"/>
</dbReference>
<dbReference type="GO" id="GO:0016020">
    <property type="term" value="C:membrane"/>
    <property type="evidence" value="ECO:0007669"/>
    <property type="project" value="UniProtKB-SubCell"/>
</dbReference>
<sequence>MDFYRILVICIHVYTRLVFAPLKKDLKLLRLISLCIPIIRPFSFLIYPPPKSFSPLNSILPSILPIIPFAISSSLLFSYTFHVFYRFLFQPLLSVPYANSKQTNCLLVASFVYLPYRSPLPVVIEIMVQRYL</sequence>
<proteinExistence type="inferred from homology"/>
<organism>
    <name type="scientific">Schizosaccharomyces pombe (strain 972 / ATCC 24843)</name>
    <name type="common">Fission yeast</name>
    <dbReference type="NCBI Taxonomy" id="284812"/>
    <lineage>
        <taxon>Eukaryota</taxon>
        <taxon>Fungi</taxon>
        <taxon>Dikarya</taxon>
        <taxon>Ascomycota</taxon>
        <taxon>Taphrinomycotina</taxon>
        <taxon>Schizosaccharomycetes</taxon>
        <taxon>Schizosaccharomycetales</taxon>
        <taxon>Schizosaccharomycetaceae</taxon>
        <taxon>Schizosaccharomyces</taxon>
    </lineage>
</organism>
<keyword id="KW-0472">Membrane</keyword>
<keyword id="KW-1185">Reference proteome</keyword>
<keyword id="KW-0812">Transmembrane</keyword>
<keyword id="KW-1133">Transmembrane helix</keyword>
<evidence type="ECO:0000255" key="1"/>
<evidence type="ECO:0000305" key="2"/>
<evidence type="ECO:0000312" key="3">
    <source>
        <dbReference type="PomBase" id="SPCC1840.13"/>
    </source>
</evidence>
<feature type="chain" id="PRO_0000462106" description="Uncharacterized protein SPCC1840.13">
    <location>
        <begin position="1"/>
        <end position="132"/>
    </location>
</feature>
<feature type="transmembrane region" description="Helical" evidence="1">
    <location>
        <begin position="28"/>
        <end position="48"/>
    </location>
</feature>
<feature type="transmembrane region" description="Helical" evidence="1">
    <location>
        <begin position="59"/>
        <end position="79"/>
    </location>
</feature>
<feature type="transmembrane region" description="Helical" evidence="1">
    <location>
        <begin position="106"/>
        <end position="126"/>
    </location>
</feature>
<reference key="1">
    <citation type="journal article" date="2002" name="Nature">
        <title>The genome sequence of Schizosaccharomyces pombe.</title>
        <authorList>
            <person name="Wood V."/>
            <person name="Gwilliam R."/>
            <person name="Rajandream M.A."/>
            <person name="Lyne M.H."/>
            <person name="Lyne R."/>
            <person name="Stewart A."/>
            <person name="Sgouros J.G."/>
            <person name="Peat N."/>
            <person name="Hayles J."/>
            <person name="Baker S.G."/>
            <person name="Basham D."/>
            <person name="Bowman S."/>
            <person name="Brooks K."/>
            <person name="Brown D."/>
            <person name="Brown S."/>
            <person name="Chillingworth T."/>
            <person name="Churcher C.M."/>
            <person name="Collins M."/>
            <person name="Connor R."/>
            <person name="Cronin A."/>
            <person name="Davis P."/>
            <person name="Feltwell T."/>
            <person name="Fraser A."/>
            <person name="Gentles S."/>
            <person name="Goble A."/>
            <person name="Hamlin N."/>
            <person name="Harris D.E."/>
            <person name="Hidalgo J."/>
            <person name="Hodgson G."/>
            <person name="Holroyd S."/>
            <person name="Hornsby T."/>
            <person name="Howarth S."/>
            <person name="Huckle E.J."/>
            <person name="Hunt S."/>
            <person name="Jagels K."/>
            <person name="James K.D."/>
            <person name="Jones L."/>
            <person name="Jones M."/>
            <person name="Leather S."/>
            <person name="McDonald S."/>
            <person name="McLean J."/>
            <person name="Mooney P."/>
            <person name="Moule S."/>
            <person name="Mungall K.L."/>
            <person name="Murphy L.D."/>
            <person name="Niblett D."/>
            <person name="Odell C."/>
            <person name="Oliver K."/>
            <person name="O'Neil S."/>
            <person name="Pearson D."/>
            <person name="Quail M.A."/>
            <person name="Rabbinowitsch E."/>
            <person name="Rutherford K.M."/>
            <person name="Rutter S."/>
            <person name="Saunders D."/>
            <person name="Seeger K."/>
            <person name="Sharp S."/>
            <person name="Skelton J."/>
            <person name="Simmonds M.N."/>
            <person name="Squares R."/>
            <person name="Squares S."/>
            <person name="Stevens K."/>
            <person name="Taylor K."/>
            <person name="Taylor R.G."/>
            <person name="Tivey A."/>
            <person name="Walsh S.V."/>
            <person name="Warren T."/>
            <person name="Whitehead S."/>
            <person name="Woodward J.R."/>
            <person name="Volckaert G."/>
            <person name="Aert R."/>
            <person name="Robben J."/>
            <person name="Grymonprez B."/>
            <person name="Weltjens I."/>
            <person name="Vanstreels E."/>
            <person name="Rieger M."/>
            <person name="Schaefer M."/>
            <person name="Mueller-Auer S."/>
            <person name="Gabel C."/>
            <person name="Fuchs M."/>
            <person name="Duesterhoeft A."/>
            <person name="Fritzc C."/>
            <person name="Holzer E."/>
            <person name="Moestl D."/>
            <person name="Hilbert H."/>
            <person name="Borzym K."/>
            <person name="Langer I."/>
            <person name="Beck A."/>
            <person name="Lehrach H."/>
            <person name="Reinhardt R."/>
            <person name="Pohl T.M."/>
            <person name="Eger P."/>
            <person name="Zimmermann W."/>
            <person name="Wedler H."/>
            <person name="Wambutt R."/>
            <person name="Purnelle B."/>
            <person name="Goffeau A."/>
            <person name="Cadieu E."/>
            <person name="Dreano S."/>
            <person name="Gloux S."/>
            <person name="Lelaure V."/>
            <person name="Mottier S."/>
            <person name="Galibert F."/>
            <person name="Aves S.J."/>
            <person name="Xiang Z."/>
            <person name="Hunt C."/>
            <person name="Moore K."/>
            <person name="Hurst S.M."/>
            <person name="Lucas M."/>
            <person name="Rochet M."/>
            <person name="Gaillardin C."/>
            <person name="Tallada V.A."/>
            <person name="Garzon A."/>
            <person name="Thode G."/>
            <person name="Daga R.R."/>
            <person name="Cruzado L."/>
            <person name="Jimenez J."/>
            <person name="Sanchez M."/>
            <person name="del Rey F."/>
            <person name="Benito J."/>
            <person name="Dominguez A."/>
            <person name="Revuelta J.L."/>
            <person name="Moreno S."/>
            <person name="Armstrong J."/>
            <person name="Forsburg S.L."/>
            <person name="Cerutti L."/>
            <person name="Lowe T."/>
            <person name="McCombie W.R."/>
            <person name="Paulsen I."/>
            <person name="Potashkin J."/>
            <person name="Shpakovski G.V."/>
            <person name="Ussery D."/>
            <person name="Barrell B.G."/>
            <person name="Nurse P."/>
        </authorList>
    </citation>
    <scope>NUCLEOTIDE SEQUENCE [LARGE SCALE GENOMIC DNA]</scope>
    <source>
        <strain>972 / ATCC 24843</strain>
    </source>
</reference>
<reference key="2">
    <citation type="journal article" date="2014" name="Nat. Struct. Mol. Biol.">
        <title>The translational landscape of fission-yeast meiosis and sporulation.</title>
        <authorList>
            <person name="Duncan C.D."/>
            <person name="Mata J."/>
        </authorList>
    </citation>
    <scope>IDENTIFICATION</scope>
</reference>
<accession>A0AAN2H888</accession>
<gene>
    <name evidence="3" type="ORF">SPCC1840.13</name>
</gene>
<name>YQJD_SCHPO</name>
<comment type="subcellular location">
    <subcellularLocation>
        <location evidence="1">Membrane</location>
        <topology evidence="1">Multi-pass membrane protein</topology>
    </subcellularLocation>
</comment>